<proteinExistence type="evidence at protein level"/>
<evidence type="ECO:0000250" key="1"/>
<evidence type="ECO:0000250" key="2">
    <source>
        <dbReference type="UniProtKB" id="Q96C19"/>
    </source>
</evidence>
<evidence type="ECO:0000255" key="3">
    <source>
        <dbReference type="PROSITE-ProRule" id="PRU00448"/>
    </source>
</evidence>
<evidence type="ECO:0000256" key="4">
    <source>
        <dbReference type="SAM" id="MobiDB-lite"/>
    </source>
</evidence>
<evidence type="ECO:0000269" key="5">
    <source>
    </source>
</evidence>
<evidence type="ECO:0000269" key="6">
    <source>
    </source>
</evidence>
<evidence type="ECO:0000305" key="7"/>
<evidence type="ECO:0007744" key="8">
    <source>
    </source>
</evidence>
<evidence type="ECO:0007744" key="9">
    <source>
    </source>
</evidence>
<protein>
    <recommendedName>
        <fullName>EF-hand domain-containing protein D2</fullName>
    </recommendedName>
    <alternativeName>
        <fullName>Swiprosin-1</fullName>
    </alternativeName>
</protein>
<feature type="initiator methionine" description="Removed" evidence="2">
    <location>
        <position position="1"/>
    </location>
</feature>
<feature type="chain" id="PRO_0000073646" description="EF-hand domain-containing protein D2">
    <location>
        <begin position="2"/>
        <end position="240"/>
    </location>
</feature>
<feature type="domain" description="EF-hand 1" evidence="3">
    <location>
        <begin position="92"/>
        <end position="127"/>
    </location>
</feature>
<feature type="domain" description="EF-hand 2" evidence="3">
    <location>
        <begin position="128"/>
        <end position="163"/>
    </location>
</feature>
<feature type="region of interest" description="Disordered" evidence="4">
    <location>
        <begin position="1"/>
        <end position="51"/>
    </location>
</feature>
<feature type="compositionally biased region" description="Low complexity" evidence="4">
    <location>
        <begin position="32"/>
        <end position="47"/>
    </location>
</feature>
<feature type="binding site" evidence="7">
    <location>
        <position position="105"/>
    </location>
    <ligand>
        <name>Ca(2+)</name>
        <dbReference type="ChEBI" id="CHEBI:29108"/>
        <label>1</label>
    </ligand>
</feature>
<feature type="binding site" evidence="7">
    <location>
        <position position="109"/>
    </location>
    <ligand>
        <name>Ca(2+)</name>
        <dbReference type="ChEBI" id="CHEBI:29108"/>
        <label>1</label>
    </ligand>
</feature>
<feature type="binding site" evidence="7">
    <location>
        <position position="116"/>
    </location>
    <ligand>
        <name>Ca(2+)</name>
        <dbReference type="ChEBI" id="CHEBI:29108"/>
        <label>1</label>
    </ligand>
</feature>
<feature type="binding site" evidence="7">
    <location>
        <position position="141"/>
    </location>
    <ligand>
        <name>Ca(2+)</name>
        <dbReference type="ChEBI" id="CHEBI:29108"/>
        <label>2</label>
    </ligand>
</feature>
<feature type="binding site" evidence="7">
    <location>
        <position position="143"/>
    </location>
    <ligand>
        <name>Ca(2+)</name>
        <dbReference type="ChEBI" id="CHEBI:29108"/>
        <label>2</label>
    </ligand>
</feature>
<feature type="binding site" evidence="7">
    <location>
        <position position="145"/>
    </location>
    <ligand>
        <name>Ca(2+)</name>
        <dbReference type="ChEBI" id="CHEBI:29108"/>
        <label>2</label>
    </ligand>
</feature>
<feature type="binding site" evidence="7">
    <location>
        <position position="147"/>
    </location>
    <ligand>
        <name>Ca(2+)</name>
        <dbReference type="ChEBI" id="CHEBI:29108"/>
        <label>2</label>
    </ligand>
</feature>
<feature type="binding site" evidence="7">
    <location>
        <position position="152"/>
    </location>
    <ligand>
        <name>Ca(2+)</name>
        <dbReference type="ChEBI" id="CHEBI:29108"/>
        <label>2</label>
    </ligand>
</feature>
<feature type="modified residue" description="N-acetylalanine" evidence="2">
    <location>
        <position position="2"/>
    </location>
</feature>
<feature type="modified residue" description="Phosphoserine" evidence="2">
    <location>
        <position position="11"/>
    </location>
</feature>
<feature type="modified residue" description="Phosphoserine" evidence="9">
    <location>
        <position position="74"/>
    </location>
</feature>
<feature type="modified residue" description="Phosphoserine" evidence="2">
    <location>
        <position position="76"/>
    </location>
</feature>
<feature type="modified residue" description="Phosphotyrosine" evidence="8">
    <location>
        <position position="83"/>
    </location>
</feature>
<feature type="modified residue" description="N6-acetyllysine" evidence="2">
    <location>
        <position position="233"/>
    </location>
</feature>
<feature type="sequence conflict" description="In Ref. 1; BAB27476." evidence="7" ref="1">
    <original>L</original>
    <variation>V</variation>
    <location>
        <position position="14"/>
    </location>
</feature>
<feature type="sequence conflict" description="In Ref. 1; BAB27476." evidence="7" ref="1">
    <original>Q</original>
    <variation>H</variation>
    <location>
        <position position="172"/>
    </location>
</feature>
<name>EFHD2_MOUSE</name>
<gene>
    <name type="primary">Efhd2</name>
    <name type="synonym">Sws1</name>
</gene>
<sequence>MATDELASKLSRRLQMEGEGGEATEQPGLNGAAAAAAAEAPDETAQALGSADDELSAKLLRRADLNQGIGEPQSPSRRVFNPYTEFKEFSRKQIKDMEKMFKQYDAGRDGFIDLMELKLMMEKLGAPQTHLGLKSMIQEVDEDFDSKLSFREFLLIFRKAAAGELQEDSGLQVLARLSEIDVSTEGVKGAKNFFEAKVQAINVSSRFEEEIKAEQEERKKQAEEVKQRKAAFKELQSTFK</sequence>
<dbReference type="EMBL" id="AK007560">
    <property type="protein sequence ID" value="BAB25108.1"/>
    <property type="molecule type" value="mRNA"/>
</dbReference>
<dbReference type="EMBL" id="AK011219">
    <property type="protein sequence ID" value="BAB27476.1"/>
    <property type="molecule type" value="mRNA"/>
</dbReference>
<dbReference type="CCDS" id="CCDS18885.1"/>
<dbReference type="SMR" id="Q9D8Y0"/>
<dbReference type="FunCoup" id="Q9D8Y0">
    <property type="interactions" value="427"/>
</dbReference>
<dbReference type="IntAct" id="Q9D8Y0">
    <property type="interactions" value="3"/>
</dbReference>
<dbReference type="STRING" id="10090.ENSMUSP00000044502"/>
<dbReference type="GlyGen" id="Q9D8Y0">
    <property type="glycosylation" value="2 sites, 1 N-linked glycan (1 site), 1 O-linked glycan (1 site)"/>
</dbReference>
<dbReference type="iPTMnet" id="Q9D8Y0"/>
<dbReference type="PhosphoSitePlus" id="Q9D8Y0"/>
<dbReference type="SwissPalm" id="Q9D8Y0"/>
<dbReference type="REPRODUCTION-2DPAGE" id="Q9D8Y0"/>
<dbReference type="CPTAC" id="non-CPTAC-3789"/>
<dbReference type="jPOST" id="Q9D8Y0"/>
<dbReference type="PaxDb" id="10090-ENSMUSP00000044502"/>
<dbReference type="PeptideAtlas" id="Q9D8Y0"/>
<dbReference type="ProteomicsDB" id="275441"/>
<dbReference type="Pumba" id="Q9D8Y0"/>
<dbReference type="AGR" id="MGI:106504"/>
<dbReference type="MGI" id="MGI:106504">
    <property type="gene designation" value="Efhd2"/>
</dbReference>
<dbReference type="eggNOG" id="KOG0041">
    <property type="taxonomic scope" value="Eukaryota"/>
</dbReference>
<dbReference type="InParanoid" id="Q9D8Y0"/>
<dbReference type="PhylomeDB" id="Q9D8Y0"/>
<dbReference type="Reactome" id="R-MMU-9013405">
    <property type="pathway name" value="RHOD GTPase cycle"/>
</dbReference>
<dbReference type="CD-CODE" id="CE726F99">
    <property type="entry name" value="Postsynaptic density"/>
</dbReference>
<dbReference type="ChiTaRS" id="Efhd2">
    <property type="organism name" value="mouse"/>
</dbReference>
<dbReference type="PRO" id="PR:Q9D8Y0"/>
<dbReference type="Proteomes" id="UP000000589">
    <property type="component" value="Unplaced"/>
</dbReference>
<dbReference type="RNAct" id="Q9D8Y0">
    <property type="molecule type" value="protein"/>
</dbReference>
<dbReference type="GO" id="GO:0045121">
    <property type="term" value="C:membrane raft"/>
    <property type="evidence" value="ECO:0007669"/>
    <property type="project" value="UniProtKB-SubCell"/>
</dbReference>
<dbReference type="GO" id="GO:0005509">
    <property type="term" value="F:calcium ion binding"/>
    <property type="evidence" value="ECO:0000314"/>
    <property type="project" value="MGI"/>
</dbReference>
<dbReference type="CDD" id="cd00051">
    <property type="entry name" value="EFh"/>
    <property type="match status" value="1"/>
</dbReference>
<dbReference type="FunFam" id="1.10.238.10:FF:000112">
    <property type="entry name" value="EF-hand domain family, member D2"/>
    <property type="match status" value="1"/>
</dbReference>
<dbReference type="Gene3D" id="1.10.238.10">
    <property type="entry name" value="EF-hand"/>
    <property type="match status" value="1"/>
</dbReference>
<dbReference type="InterPro" id="IPR049025">
    <property type="entry name" value="AIF-1_EF_pair"/>
</dbReference>
<dbReference type="InterPro" id="IPR011992">
    <property type="entry name" value="EF-hand-dom_pair"/>
</dbReference>
<dbReference type="InterPro" id="IPR002048">
    <property type="entry name" value="EF_hand_dom"/>
</dbReference>
<dbReference type="InterPro" id="IPR040365">
    <property type="entry name" value="EFHD1/2"/>
</dbReference>
<dbReference type="PANTHER" id="PTHR13025">
    <property type="entry name" value="EF-HAND DOMAIN-CONTAINING PROTEIN D"/>
    <property type="match status" value="1"/>
</dbReference>
<dbReference type="PANTHER" id="PTHR13025:SF2">
    <property type="entry name" value="EF-HAND DOMAIN-CONTAINING PROTEIN D2"/>
    <property type="match status" value="1"/>
</dbReference>
<dbReference type="Pfam" id="PF21008">
    <property type="entry name" value="AIF-1"/>
    <property type="match status" value="1"/>
</dbReference>
<dbReference type="SMART" id="SM00054">
    <property type="entry name" value="EFh"/>
    <property type="match status" value="2"/>
</dbReference>
<dbReference type="SUPFAM" id="SSF47473">
    <property type="entry name" value="EF-hand"/>
    <property type="match status" value="1"/>
</dbReference>
<dbReference type="PROSITE" id="PS50222">
    <property type="entry name" value="EF_HAND_2"/>
    <property type="match status" value="2"/>
</dbReference>
<accession>Q9D8Y0</accession>
<accession>Q9D0P4</accession>
<comment type="function">
    <text evidence="6">May regulate B-cell receptor (BCR)-induced immature and primary B-cell apoptosis. Plays a role as negative regulator of the canonical NF-kappa-B-activating branch. Controls spontaneous apoptosis through the regulation of BCL2L1 abundance.</text>
</comment>
<comment type="subunit">
    <text evidence="1">Interacts with CASP9; with inactive form.</text>
</comment>
<comment type="subcellular location">
    <subcellularLocation>
        <location evidence="5">Membrane raft</location>
    </subcellularLocation>
    <text>In immature B-cell line WEHI-231.</text>
</comment>
<comment type="tissue specificity">
    <text evidence="6">Detected in thymus, kidney, spleen, lung, liver and brain. Highest abundance in brain and lowest in kidney and thymus.</text>
</comment>
<comment type="developmental stage">
    <text evidence="6">Expressed throughout B-cell differentiation, with highest expression in immature bone marrow B-cells.</text>
</comment>
<organism>
    <name type="scientific">Mus musculus</name>
    <name type="common">Mouse</name>
    <dbReference type="NCBI Taxonomy" id="10090"/>
    <lineage>
        <taxon>Eukaryota</taxon>
        <taxon>Metazoa</taxon>
        <taxon>Chordata</taxon>
        <taxon>Craniata</taxon>
        <taxon>Vertebrata</taxon>
        <taxon>Euteleostomi</taxon>
        <taxon>Mammalia</taxon>
        <taxon>Eutheria</taxon>
        <taxon>Euarchontoglires</taxon>
        <taxon>Glires</taxon>
        <taxon>Rodentia</taxon>
        <taxon>Myomorpha</taxon>
        <taxon>Muroidea</taxon>
        <taxon>Muridae</taxon>
        <taxon>Murinae</taxon>
        <taxon>Mus</taxon>
        <taxon>Mus</taxon>
    </lineage>
</organism>
<reference key="1">
    <citation type="journal article" date="2005" name="Science">
        <title>The transcriptional landscape of the mammalian genome.</title>
        <authorList>
            <person name="Carninci P."/>
            <person name="Kasukawa T."/>
            <person name="Katayama S."/>
            <person name="Gough J."/>
            <person name="Frith M.C."/>
            <person name="Maeda N."/>
            <person name="Oyama R."/>
            <person name="Ravasi T."/>
            <person name="Lenhard B."/>
            <person name="Wells C."/>
            <person name="Kodzius R."/>
            <person name="Shimokawa K."/>
            <person name="Bajic V.B."/>
            <person name="Brenner S.E."/>
            <person name="Batalov S."/>
            <person name="Forrest A.R."/>
            <person name="Zavolan M."/>
            <person name="Davis M.J."/>
            <person name="Wilming L.G."/>
            <person name="Aidinis V."/>
            <person name="Allen J.E."/>
            <person name="Ambesi-Impiombato A."/>
            <person name="Apweiler R."/>
            <person name="Aturaliya R.N."/>
            <person name="Bailey T.L."/>
            <person name="Bansal M."/>
            <person name="Baxter L."/>
            <person name="Beisel K.W."/>
            <person name="Bersano T."/>
            <person name="Bono H."/>
            <person name="Chalk A.M."/>
            <person name="Chiu K.P."/>
            <person name="Choudhary V."/>
            <person name="Christoffels A."/>
            <person name="Clutterbuck D.R."/>
            <person name="Crowe M.L."/>
            <person name="Dalla E."/>
            <person name="Dalrymple B.P."/>
            <person name="de Bono B."/>
            <person name="Della Gatta G."/>
            <person name="di Bernardo D."/>
            <person name="Down T."/>
            <person name="Engstrom P."/>
            <person name="Fagiolini M."/>
            <person name="Faulkner G."/>
            <person name="Fletcher C.F."/>
            <person name="Fukushima T."/>
            <person name="Furuno M."/>
            <person name="Futaki S."/>
            <person name="Gariboldi M."/>
            <person name="Georgii-Hemming P."/>
            <person name="Gingeras T.R."/>
            <person name="Gojobori T."/>
            <person name="Green R.E."/>
            <person name="Gustincich S."/>
            <person name="Harbers M."/>
            <person name="Hayashi Y."/>
            <person name="Hensch T.K."/>
            <person name="Hirokawa N."/>
            <person name="Hill D."/>
            <person name="Huminiecki L."/>
            <person name="Iacono M."/>
            <person name="Ikeo K."/>
            <person name="Iwama A."/>
            <person name="Ishikawa T."/>
            <person name="Jakt M."/>
            <person name="Kanapin A."/>
            <person name="Katoh M."/>
            <person name="Kawasawa Y."/>
            <person name="Kelso J."/>
            <person name="Kitamura H."/>
            <person name="Kitano H."/>
            <person name="Kollias G."/>
            <person name="Krishnan S.P."/>
            <person name="Kruger A."/>
            <person name="Kummerfeld S.K."/>
            <person name="Kurochkin I.V."/>
            <person name="Lareau L.F."/>
            <person name="Lazarevic D."/>
            <person name="Lipovich L."/>
            <person name="Liu J."/>
            <person name="Liuni S."/>
            <person name="McWilliam S."/>
            <person name="Madan Babu M."/>
            <person name="Madera M."/>
            <person name="Marchionni L."/>
            <person name="Matsuda H."/>
            <person name="Matsuzawa S."/>
            <person name="Miki H."/>
            <person name="Mignone F."/>
            <person name="Miyake S."/>
            <person name="Morris K."/>
            <person name="Mottagui-Tabar S."/>
            <person name="Mulder N."/>
            <person name="Nakano N."/>
            <person name="Nakauchi H."/>
            <person name="Ng P."/>
            <person name="Nilsson R."/>
            <person name="Nishiguchi S."/>
            <person name="Nishikawa S."/>
            <person name="Nori F."/>
            <person name="Ohara O."/>
            <person name="Okazaki Y."/>
            <person name="Orlando V."/>
            <person name="Pang K.C."/>
            <person name="Pavan W.J."/>
            <person name="Pavesi G."/>
            <person name="Pesole G."/>
            <person name="Petrovsky N."/>
            <person name="Piazza S."/>
            <person name="Reed J."/>
            <person name="Reid J.F."/>
            <person name="Ring B.Z."/>
            <person name="Ringwald M."/>
            <person name="Rost B."/>
            <person name="Ruan Y."/>
            <person name="Salzberg S.L."/>
            <person name="Sandelin A."/>
            <person name="Schneider C."/>
            <person name="Schoenbach C."/>
            <person name="Sekiguchi K."/>
            <person name="Semple C.A."/>
            <person name="Seno S."/>
            <person name="Sessa L."/>
            <person name="Sheng Y."/>
            <person name="Shibata Y."/>
            <person name="Shimada H."/>
            <person name="Shimada K."/>
            <person name="Silva D."/>
            <person name="Sinclair B."/>
            <person name="Sperling S."/>
            <person name="Stupka E."/>
            <person name="Sugiura K."/>
            <person name="Sultana R."/>
            <person name="Takenaka Y."/>
            <person name="Taki K."/>
            <person name="Tammoja K."/>
            <person name="Tan S.L."/>
            <person name="Tang S."/>
            <person name="Taylor M.S."/>
            <person name="Tegner J."/>
            <person name="Teichmann S.A."/>
            <person name="Ueda H.R."/>
            <person name="van Nimwegen E."/>
            <person name="Verardo R."/>
            <person name="Wei C.L."/>
            <person name="Yagi K."/>
            <person name="Yamanishi H."/>
            <person name="Zabarovsky E."/>
            <person name="Zhu S."/>
            <person name="Zimmer A."/>
            <person name="Hide W."/>
            <person name="Bult C."/>
            <person name="Grimmond S.M."/>
            <person name="Teasdale R.D."/>
            <person name="Liu E.T."/>
            <person name="Brusic V."/>
            <person name="Quackenbush J."/>
            <person name="Wahlestedt C."/>
            <person name="Mattick J.S."/>
            <person name="Hume D.A."/>
            <person name="Kai C."/>
            <person name="Sasaki D."/>
            <person name="Tomaru Y."/>
            <person name="Fukuda S."/>
            <person name="Kanamori-Katayama M."/>
            <person name="Suzuki M."/>
            <person name="Aoki J."/>
            <person name="Arakawa T."/>
            <person name="Iida J."/>
            <person name="Imamura K."/>
            <person name="Itoh M."/>
            <person name="Kato T."/>
            <person name="Kawaji H."/>
            <person name="Kawagashira N."/>
            <person name="Kawashima T."/>
            <person name="Kojima M."/>
            <person name="Kondo S."/>
            <person name="Konno H."/>
            <person name="Nakano K."/>
            <person name="Ninomiya N."/>
            <person name="Nishio T."/>
            <person name="Okada M."/>
            <person name="Plessy C."/>
            <person name="Shibata K."/>
            <person name="Shiraki T."/>
            <person name="Suzuki S."/>
            <person name="Tagami M."/>
            <person name="Waki K."/>
            <person name="Watahiki A."/>
            <person name="Okamura-Oho Y."/>
            <person name="Suzuki H."/>
            <person name="Kawai J."/>
            <person name="Hayashizaki Y."/>
        </authorList>
    </citation>
    <scope>NUCLEOTIDE SEQUENCE [LARGE SCALE MRNA]</scope>
    <source>
        <strain>C57BL/6J</strain>
        <tissue>Embryo</tissue>
        <tissue>Pancreas</tissue>
    </source>
</reference>
<reference key="2">
    <citation type="submission" date="2007-04" db="UniProtKB">
        <authorList>
            <person name="Lubec G."/>
            <person name="Kang S.U."/>
        </authorList>
    </citation>
    <scope>PROTEIN SEQUENCE OF 177-188 AND 198-206</scope>
    <scope>IDENTIFICATION BY MASS SPECTROMETRY</scope>
    <source>
        <strain>C57BL/6J</strain>
        <tissue>Brain</tissue>
    </source>
</reference>
<reference key="3">
    <citation type="journal article" date="2005" name="J. Immunol.">
        <title>Lipid rafts associate with intracellular B cell receptors and exhibit a B cell stage-specific protein composition.</title>
        <authorList>
            <person name="Mielenz D."/>
            <person name="Vettermann C."/>
            <person name="Hampel M."/>
            <person name="Lang C."/>
            <person name="Avramidou A."/>
            <person name="Karas M."/>
            <person name="Jacek H.-M."/>
        </authorList>
    </citation>
    <scope>SUBCELLULAR LOCATION</scope>
</reference>
<reference key="4">
    <citation type="journal article" date="2007" name="Cell Death Differ.">
        <title>The novel adaptor protein Swiprosin-1 enhances BCR signals and contributes to BCR-induced apoptosis.</title>
        <authorList>
            <person name="Avramidou A."/>
            <person name="Kroczek C."/>
            <person name="Lang C."/>
            <person name="Schuh W."/>
            <person name="Jaeck H.-M."/>
            <person name="Mielenz D."/>
        </authorList>
    </citation>
    <scope>FUNCTION</scope>
    <scope>TISSUE SPECIFICITY</scope>
    <scope>DEVELOPMENTAL STAGE</scope>
</reference>
<reference key="5">
    <citation type="journal article" date="2007" name="Proc. Natl. Acad. Sci. U.S.A.">
        <title>Large-scale phosphorylation analysis of mouse liver.</title>
        <authorList>
            <person name="Villen J."/>
            <person name="Beausoleil S.A."/>
            <person name="Gerber S.A."/>
            <person name="Gygi S.P."/>
        </authorList>
    </citation>
    <scope>IDENTIFICATION BY MASS SPECTROMETRY [LARGE SCALE ANALYSIS]</scope>
    <source>
        <tissue>Liver</tissue>
    </source>
</reference>
<reference key="6">
    <citation type="journal article" date="2008" name="J. Proteome Res.">
        <title>Large-scale identification and evolution indexing of tyrosine phosphorylation sites from murine brain.</title>
        <authorList>
            <person name="Ballif B.A."/>
            <person name="Carey G.R."/>
            <person name="Sunyaev S.R."/>
            <person name="Gygi S.P."/>
        </authorList>
    </citation>
    <scope>PHOSPHORYLATION [LARGE SCALE ANALYSIS] AT TYR-83</scope>
    <scope>IDENTIFICATION BY MASS SPECTROMETRY [LARGE SCALE ANALYSIS]</scope>
    <source>
        <tissue>Brain</tissue>
    </source>
</reference>
<reference key="7">
    <citation type="journal article" date="2010" name="Cell">
        <title>A tissue-specific atlas of mouse protein phosphorylation and expression.</title>
        <authorList>
            <person name="Huttlin E.L."/>
            <person name="Jedrychowski M.P."/>
            <person name="Elias J.E."/>
            <person name="Goswami T."/>
            <person name="Rad R."/>
            <person name="Beausoleil S.A."/>
            <person name="Villen J."/>
            <person name="Haas W."/>
            <person name="Sowa M.E."/>
            <person name="Gygi S.P."/>
        </authorList>
    </citation>
    <scope>PHOSPHORYLATION [LARGE SCALE ANALYSIS] AT SER-74</scope>
    <scope>IDENTIFICATION BY MASS SPECTROMETRY [LARGE SCALE ANALYSIS]</scope>
    <source>
        <tissue>Brain</tissue>
        <tissue>Brown adipose tissue</tissue>
        <tissue>Heart</tissue>
        <tissue>Kidney</tissue>
        <tissue>Liver</tissue>
        <tissue>Lung</tissue>
        <tissue>Pancreas</tissue>
        <tissue>Spleen</tissue>
        <tissue>Testis</tissue>
    </source>
</reference>
<keyword id="KW-0007">Acetylation</keyword>
<keyword id="KW-0106">Calcium</keyword>
<keyword id="KW-0903">Direct protein sequencing</keyword>
<keyword id="KW-0472">Membrane</keyword>
<keyword id="KW-0479">Metal-binding</keyword>
<keyword id="KW-0597">Phosphoprotein</keyword>
<keyword id="KW-1185">Reference proteome</keyword>
<keyword id="KW-0677">Repeat</keyword>